<gene>
    <name evidence="1" type="primary">tgt</name>
    <name type="ordered locus">Shewmr4_1382</name>
</gene>
<sequence length="374" mass="42576">MKFELDTTDGRARRGRLIFERGTVETPAFMPVGTYGTVKGMTPEEVRATGADILLGNTFHLWLRPGEEIMRKHGDLHDFMNWQRPILTDSGGFQVFSLGDIRKITEEGVHFRSPINGEKIFLDPEKSMQIQHALGSDVVMIFDECTPYPATEDEARKSMQMSLRWAKRSRDEFDRLENPNSLFGIIQGSVYEDLRDESLKGLVEIGFDGYAVGGLAVGEPKEDMHRILEHVCPQIPADKPRYLMGVGKPEDLVEGVRRGIDMFDCVMPTRNARNGHLFTSEGVIKIRNARHRDDTSPLDPKCDCYTCKNYSRAYLYHLDRCNEILGARLNTIHNLRYYQMLMEGLRGAIETGTLDAFVKDFYTSQGREVPELVD</sequence>
<organism>
    <name type="scientific">Shewanella sp. (strain MR-4)</name>
    <dbReference type="NCBI Taxonomy" id="60480"/>
    <lineage>
        <taxon>Bacteria</taxon>
        <taxon>Pseudomonadati</taxon>
        <taxon>Pseudomonadota</taxon>
        <taxon>Gammaproteobacteria</taxon>
        <taxon>Alteromonadales</taxon>
        <taxon>Shewanellaceae</taxon>
        <taxon>Shewanella</taxon>
    </lineage>
</organism>
<keyword id="KW-0328">Glycosyltransferase</keyword>
<keyword id="KW-0479">Metal-binding</keyword>
<keyword id="KW-0671">Queuosine biosynthesis</keyword>
<keyword id="KW-0808">Transferase</keyword>
<keyword id="KW-0819">tRNA processing</keyword>
<keyword id="KW-0862">Zinc</keyword>
<proteinExistence type="inferred from homology"/>
<feature type="chain" id="PRO_1000016851" description="Queuine tRNA-ribosyltransferase">
    <location>
        <begin position="1"/>
        <end position="374"/>
    </location>
</feature>
<feature type="region of interest" description="RNA binding" evidence="1">
    <location>
        <begin position="245"/>
        <end position="251"/>
    </location>
</feature>
<feature type="region of interest" description="RNA binding; important for wobble base 34 recognition" evidence="1">
    <location>
        <begin position="269"/>
        <end position="273"/>
    </location>
</feature>
<feature type="active site" description="Proton acceptor" evidence="1">
    <location>
        <position position="89"/>
    </location>
</feature>
<feature type="active site" description="Nucleophile" evidence="1">
    <location>
        <position position="264"/>
    </location>
</feature>
<feature type="binding site" evidence="1">
    <location>
        <begin position="89"/>
        <end position="93"/>
    </location>
    <ligand>
        <name>substrate</name>
    </ligand>
</feature>
<feature type="binding site" evidence="1">
    <location>
        <position position="143"/>
    </location>
    <ligand>
        <name>substrate</name>
    </ligand>
</feature>
<feature type="binding site" evidence="1">
    <location>
        <position position="187"/>
    </location>
    <ligand>
        <name>substrate</name>
    </ligand>
</feature>
<feature type="binding site" evidence="1">
    <location>
        <position position="214"/>
    </location>
    <ligand>
        <name>substrate</name>
    </ligand>
</feature>
<feature type="binding site" evidence="1">
    <location>
        <position position="302"/>
    </location>
    <ligand>
        <name>Zn(2+)</name>
        <dbReference type="ChEBI" id="CHEBI:29105"/>
    </ligand>
</feature>
<feature type="binding site" evidence="1">
    <location>
        <position position="304"/>
    </location>
    <ligand>
        <name>Zn(2+)</name>
        <dbReference type="ChEBI" id="CHEBI:29105"/>
    </ligand>
</feature>
<feature type="binding site" evidence="1">
    <location>
        <position position="307"/>
    </location>
    <ligand>
        <name>Zn(2+)</name>
        <dbReference type="ChEBI" id="CHEBI:29105"/>
    </ligand>
</feature>
<feature type="binding site" evidence="1">
    <location>
        <position position="333"/>
    </location>
    <ligand>
        <name>Zn(2+)</name>
        <dbReference type="ChEBI" id="CHEBI:29105"/>
    </ligand>
</feature>
<name>TGT_SHESM</name>
<comment type="function">
    <text evidence="1">Catalyzes the base-exchange of a guanine (G) residue with the queuine precursor 7-aminomethyl-7-deazaguanine (PreQ1) at position 34 (anticodon wobble position) in tRNAs with GU(N) anticodons (tRNA-Asp, -Asn, -His and -Tyr). Catalysis occurs through a double-displacement mechanism. The nucleophile active site attacks the C1' of nucleotide 34 to detach the guanine base from the RNA, forming a covalent enzyme-RNA intermediate. The proton acceptor active site deprotonates the incoming PreQ1, allowing a nucleophilic attack on the C1' of the ribose to form the product. After dissociation, two additional enzymatic reactions on the tRNA convert PreQ1 to queuine (Q), resulting in the hypermodified nucleoside queuosine (7-(((4,5-cis-dihydroxy-2-cyclopenten-1-yl)amino)methyl)-7-deazaguanosine).</text>
</comment>
<comment type="catalytic activity">
    <reaction evidence="1">
        <text>7-aminomethyl-7-carbaguanine + guanosine(34) in tRNA = 7-aminomethyl-7-carbaguanosine(34) in tRNA + guanine</text>
        <dbReference type="Rhea" id="RHEA:24104"/>
        <dbReference type="Rhea" id="RHEA-COMP:10341"/>
        <dbReference type="Rhea" id="RHEA-COMP:10342"/>
        <dbReference type="ChEBI" id="CHEBI:16235"/>
        <dbReference type="ChEBI" id="CHEBI:58703"/>
        <dbReference type="ChEBI" id="CHEBI:74269"/>
        <dbReference type="ChEBI" id="CHEBI:82833"/>
        <dbReference type="EC" id="2.4.2.29"/>
    </reaction>
</comment>
<comment type="cofactor">
    <cofactor evidence="1">
        <name>Zn(2+)</name>
        <dbReference type="ChEBI" id="CHEBI:29105"/>
    </cofactor>
    <text evidence="1">Binds 1 zinc ion per subunit.</text>
</comment>
<comment type="pathway">
    <text evidence="1">tRNA modification; tRNA-queuosine biosynthesis.</text>
</comment>
<comment type="subunit">
    <text evidence="1">Homodimer. Within each dimer, one monomer is responsible for RNA recognition and catalysis, while the other monomer binds to the replacement base PreQ1.</text>
</comment>
<comment type="similarity">
    <text evidence="1">Belongs to the queuine tRNA-ribosyltransferase family.</text>
</comment>
<reference key="1">
    <citation type="submission" date="2006-08" db="EMBL/GenBank/DDBJ databases">
        <title>Complete sequence of Shewanella sp. MR-4.</title>
        <authorList>
            <consortium name="US DOE Joint Genome Institute"/>
            <person name="Copeland A."/>
            <person name="Lucas S."/>
            <person name="Lapidus A."/>
            <person name="Barry K."/>
            <person name="Detter J.C."/>
            <person name="Glavina del Rio T."/>
            <person name="Hammon N."/>
            <person name="Israni S."/>
            <person name="Dalin E."/>
            <person name="Tice H."/>
            <person name="Pitluck S."/>
            <person name="Kiss H."/>
            <person name="Brettin T."/>
            <person name="Bruce D."/>
            <person name="Han C."/>
            <person name="Tapia R."/>
            <person name="Gilna P."/>
            <person name="Schmutz J."/>
            <person name="Larimer F."/>
            <person name="Land M."/>
            <person name="Hauser L."/>
            <person name="Kyrpides N."/>
            <person name="Mikhailova N."/>
            <person name="Nealson K."/>
            <person name="Konstantinidis K."/>
            <person name="Klappenbach J."/>
            <person name="Tiedje J."/>
            <person name="Richardson P."/>
        </authorList>
    </citation>
    <scope>NUCLEOTIDE SEQUENCE [LARGE SCALE GENOMIC DNA]</scope>
    <source>
        <strain>MR-4</strain>
    </source>
</reference>
<evidence type="ECO:0000255" key="1">
    <source>
        <dbReference type="HAMAP-Rule" id="MF_00168"/>
    </source>
</evidence>
<protein>
    <recommendedName>
        <fullName evidence="1">Queuine tRNA-ribosyltransferase</fullName>
        <ecNumber evidence="1">2.4.2.29</ecNumber>
    </recommendedName>
    <alternativeName>
        <fullName evidence="1">Guanine insertion enzyme</fullName>
    </alternativeName>
    <alternativeName>
        <fullName evidence="1">tRNA-guanine transglycosylase</fullName>
    </alternativeName>
</protein>
<accession>Q0HKF7</accession>
<dbReference type="EC" id="2.4.2.29" evidence="1"/>
<dbReference type="EMBL" id="CP000446">
    <property type="protein sequence ID" value="ABI38460.1"/>
    <property type="molecule type" value="Genomic_DNA"/>
</dbReference>
<dbReference type="RefSeq" id="WP_011622165.1">
    <property type="nucleotide sequence ID" value="NC_008321.1"/>
</dbReference>
<dbReference type="SMR" id="Q0HKF7"/>
<dbReference type="GeneID" id="75188122"/>
<dbReference type="KEGG" id="she:Shewmr4_1382"/>
<dbReference type="HOGENOM" id="CLU_022060_0_1_6"/>
<dbReference type="UniPathway" id="UPA00392"/>
<dbReference type="GO" id="GO:0005829">
    <property type="term" value="C:cytosol"/>
    <property type="evidence" value="ECO:0007669"/>
    <property type="project" value="TreeGrafter"/>
</dbReference>
<dbReference type="GO" id="GO:0046872">
    <property type="term" value="F:metal ion binding"/>
    <property type="evidence" value="ECO:0007669"/>
    <property type="project" value="UniProtKB-KW"/>
</dbReference>
<dbReference type="GO" id="GO:0008479">
    <property type="term" value="F:tRNA-guanosine(34) queuine transglycosylase activity"/>
    <property type="evidence" value="ECO:0007669"/>
    <property type="project" value="UniProtKB-UniRule"/>
</dbReference>
<dbReference type="GO" id="GO:0008616">
    <property type="term" value="P:queuosine biosynthetic process"/>
    <property type="evidence" value="ECO:0007669"/>
    <property type="project" value="UniProtKB-UniRule"/>
</dbReference>
<dbReference type="GO" id="GO:0002099">
    <property type="term" value="P:tRNA wobble guanine modification"/>
    <property type="evidence" value="ECO:0007669"/>
    <property type="project" value="TreeGrafter"/>
</dbReference>
<dbReference type="GO" id="GO:0101030">
    <property type="term" value="P:tRNA-guanine transglycosylation"/>
    <property type="evidence" value="ECO:0007669"/>
    <property type="project" value="InterPro"/>
</dbReference>
<dbReference type="FunFam" id="3.20.20.105:FF:000001">
    <property type="entry name" value="Queuine tRNA-ribosyltransferase"/>
    <property type="match status" value="1"/>
</dbReference>
<dbReference type="Gene3D" id="3.20.20.105">
    <property type="entry name" value="Queuine tRNA-ribosyltransferase-like"/>
    <property type="match status" value="1"/>
</dbReference>
<dbReference type="HAMAP" id="MF_00168">
    <property type="entry name" value="Q_tRNA_Tgt"/>
    <property type="match status" value="1"/>
</dbReference>
<dbReference type="InterPro" id="IPR050076">
    <property type="entry name" value="ArchSynthase1/Queuine_TRR"/>
</dbReference>
<dbReference type="InterPro" id="IPR004803">
    <property type="entry name" value="TGT"/>
</dbReference>
<dbReference type="InterPro" id="IPR036511">
    <property type="entry name" value="TGT-like_sf"/>
</dbReference>
<dbReference type="InterPro" id="IPR002616">
    <property type="entry name" value="tRNA_ribo_trans-like"/>
</dbReference>
<dbReference type="NCBIfam" id="TIGR00430">
    <property type="entry name" value="Q_tRNA_tgt"/>
    <property type="match status" value="1"/>
</dbReference>
<dbReference type="NCBIfam" id="TIGR00449">
    <property type="entry name" value="tgt_general"/>
    <property type="match status" value="1"/>
</dbReference>
<dbReference type="PANTHER" id="PTHR46499">
    <property type="entry name" value="QUEUINE TRNA-RIBOSYLTRANSFERASE"/>
    <property type="match status" value="1"/>
</dbReference>
<dbReference type="PANTHER" id="PTHR46499:SF1">
    <property type="entry name" value="QUEUINE TRNA-RIBOSYLTRANSFERASE"/>
    <property type="match status" value="1"/>
</dbReference>
<dbReference type="Pfam" id="PF01702">
    <property type="entry name" value="TGT"/>
    <property type="match status" value="1"/>
</dbReference>
<dbReference type="SUPFAM" id="SSF51713">
    <property type="entry name" value="tRNA-guanine transglycosylase"/>
    <property type="match status" value="1"/>
</dbReference>